<keyword id="KW-0007">Acetylation</keyword>
<keyword id="KW-0966">Cell projection</keyword>
<keyword id="KW-0963">Cytoplasm</keyword>
<keyword id="KW-0903">Direct protein sequencing</keyword>
<keyword id="KW-0443">Lipid metabolism</keyword>
<keyword id="KW-0520">NAD</keyword>
<keyword id="KW-0560">Oxidoreductase</keyword>
<keyword id="KW-0597">Phosphoprotein</keyword>
<keyword id="KW-1185">Reference proteome</keyword>
<organism>
    <name type="scientific">Equus caballus</name>
    <name type="common">Horse</name>
    <dbReference type="NCBI Taxonomy" id="9796"/>
    <lineage>
        <taxon>Eukaryota</taxon>
        <taxon>Metazoa</taxon>
        <taxon>Chordata</taxon>
        <taxon>Craniata</taxon>
        <taxon>Vertebrata</taxon>
        <taxon>Euteleostomi</taxon>
        <taxon>Mammalia</taxon>
        <taxon>Eutheria</taxon>
        <taxon>Laurasiatheria</taxon>
        <taxon>Perissodactyla</taxon>
        <taxon>Equidae</taxon>
        <taxon>Equus</taxon>
    </lineage>
</organism>
<name>AL1A1_HORSE</name>
<evidence type="ECO:0000250" key="1">
    <source>
        <dbReference type="UniProtKB" id="P00352"/>
    </source>
</evidence>
<evidence type="ECO:0000250" key="2">
    <source>
        <dbReference type="UniProtKB" id="P20000"/>
    </source>
</evidence>
<evidence type="ECO:0000250" key="3">
    <source>
        <dbReference type="UniProtKB" id="P24549"/>
    </source>
</evidence>
<evidence type="ECO:0000250" key="4">
    <source>
        <dbReference type="UniProtKB" id="P51647"/>
    </source>
</evidence>
<evidence type="ECO:0000250" key="5">
    <source>
        <dbReference type="UniProtKB" id="P51977"/>
    </source>
</evidence>
<evidence type="ECO:0000250" key="6">
    <source>
        <dbReference type="UniProtKB" id="Q8HYE4"/>
    </source>
</evidence>
<evidence type="ECO:0000255" key="7">
    <source>
        <dbReference type="PROSITE-ProRule" id="PRU10007"/>
    </source>
</evidence>
<evidence type="ECO:0000255" key="8">
    <source>
        <dbReference type="PROSITE-ProRule" id="PRU10008"/>
    </source>
</evidence>
<evidence type="ECO:0000269" key="9">
    <source>
    </source>
</evidence>
<evidence type="ECO:0000305" key="10"/>
<evidence type="ECO:0000305" key="11">
    <source>
    </source>
</evidence>
<dbReference type="EC" id="1.2.1.19" evidence="3"/>
<dbReference type="EC" id="1.2.1.28" evidence="1"/>
<dbReference type="EC" id="1.2.1.3" evidence="1"/>
<dbReference type="EC" id="1.2.1.36" evidence="4"/>
<dbReference type="PIR" id="S02302">
    <property type="entry name" value="S02302"/>
</dbReference>
<dbReference type="SMR" id="P15437"/>
<dbReference type="FunCoup" id="P15437">
    <property type="interactions" value="572"/>
</dbReference>
<dbReference type="STRING" id="9796.ENSECAP00000030248"/>
<dbReference type="iPTMnet" id="P15437"/>
<dbReference type="PaxDb" id="9796-ENSECAP00000030248"/>
<dbReference type="PeptideAtlas" id="P15437"/>
<dbReference type="InParanoid" id="P15437"/>
<dbReference type="UniPathway" id="UPA00912"/>
<dbReference type="Proteomes" id="UP000002281">
    <property type="component" value="Unplaced"/>
</dbReference>
<dbReference type="GO" id="GO:0030424">
    <property type="term" value="C:axon"/>
    <property type="evidence" value="ECO:0000250"/>
    <property type="project" value="UniProtKB"/>
</dbReference>
<dbReference type="GO" id="GO:0005829">
    <property type="term" value="C:cytosol"/>
    <property type="evidence" value="ECO:0000250"/>
    <property type="project" value="UniProtKB"/>
</dbReference>
<dbReference type="GO" id="GO:0045202">
    <property type="term" value="C:synapse"/>
    <property type="evidence" value="ECO:0000250"/>
    <property type="project" value="UniProtKB"/>
</dbReference>
<dbReference type="GO" id="GO:0106373">
    <property type="term" value="F:3-deoxyglucosone dehydrogenase activity"/>
    <property type="evidence" value="ECO:0000250"/>
    <property type="project" value="UniProtKB"/>
</dbReference>
<dbReference type="GO" id="GO:0140087">
    <property type="term" value="F:acetaldehyde dehydrogenase (NAD+) activity"/>
    <property type="evidence" value="ECO:0007669"/>
    <property type="project" value="RHEA"/>
</dbReference>
<dbReference type="GO" id="GO:0004029">
    <property type="term" value="F:aldehyde dehydrogenase (NAD+) activity"/>
    <property type="evidence" value="ECO:0000250"/>
    <property type="project" value="UniProtKB"/>
</dbReference>
<dbReference type="GO" id="GO:0019145">
    <property type="term" value="F:aminobutyraldehyde dehydrogenase (NAD+) activity"/>
    <property type="evidence" value="ECO:0000250"/>
    <property type="project" value="UniProtKB"/>
</dbReference>
<dbReference type="GO" id="GO:0018479">
    <property type="term" value="F:benzaldehyde dehydrogenase (NAD+) activity"/>
    <property type="evidence" value="ECO:0000318"/>
    <property type="project" value="GO_Central"/>
</dbReference>
<dbReference type="GO" id="GO:0051287">
    <property type="term" value="F:NAD binding"/>
    <property type="evidence" value="ECO:0000250"/>
    <property type="project" value="CAFA"/>
</dbReference>
<dbReference type="GO" id="GO:0001758">
    <property type="term" value="F:retinal dehydrogenase activity"/>
    <property type="evidence" value="ECO:0000250"/>
    <property type="project" value="UniProtKB"/>
</dbReference>
<dbReference type="GO" id="GO:0110095">
    <property type="term" value="P:cellular detoxification of aldehyde"/>
    <property type="evidence" value="ECO:0000250"/>
    <property type="project" value="UniProtKB"/>
</dbReference>
<dbReference type="GO" id="GO:0030392">
    <property type="term" value="P:fructosamine catabolic process"/>
    <property type="evidence" value="ECO:0000250"/>
    <property type="project" value="UniProtKB"/>
</dbReference>
<dbReference type="GO" id="GO:0009449">
    <property type="term" value="P:gamma-aminobutyric acid biosynthetic process"/>
    <property type="evidence" value="ECO:0000250"/>
    <property type="project" value="UniProtKB"/>
</dbReference>
<dbReference type="GO" id="GO:0036438">
    <property type="term" value="P:maintenance of lens transparency"/>
    <property type="evidence" value="ECO:0000250"/>
    <property type="project" value="UniProtKB"/>
</dbReference>
<dbReference type="GO" id="GO:0001523">
    <property type="term" value="P:retinoid metabolic process"/>
    <property type="evidence" value="ECO:0000250"/>
    <property type="project" value="UniProtKB"/>
</dbReference>
<dbReference type="GO" id="GO:0042572">
    <property type="term" value="P:retinol metabolic process"/>
    <property type="evidence" value="ECO:0007669"/>
    <property type="project" value="UniProtKB-UniPathway"/>
</dbReference>
<dbReference type="CDD" id="cd07141">
    <property type="entry name" value="ALDH_F1AB_F2_RALDH1"/>
    <property type="match status" value="1"/>
</dbReference>
<dbReference type="FunFam" id="3.40.605.10:FF:000029">
    <property type="entry name" value="Aldehyde dehydrogenase, mitochondrial"/>
    <property type="match status" value="1"/>
</dbReference>
<dbReference type="FunFam" id="3.40.605.10:FF:000026">
    <property type="entry name" value="Aldehyde dehydrogenase, putative"/>
    <property type="match status" value="1"/>
</dbReference>
<dbReference type="FunFam" id="3.40.309.10:FF:000001">
    <property type="entry name" value="Mitochondrial aldehyde dehydrogenase 2"/>
    <property type="match status" value="1"/>
</dbReference>
<dbReference type="Gene3D" id="3.40.605.10">
    <property type="entry name" value="Aldehyde Dehydrogenase, Chain A, domain 1"/>
    <property type="match status" value="1"/>
</dbReference>
<dbReference type="Gene3D" id="3.40.309.10">
    <property type="entry name" value="Aldehyde Dehydrogenase, Chain A, domain 2"/>
    <property type="match status" value="1"/>
</dbReference>
<dbReference type="InterPro" id="IPR016161">
    <property type="entry name" value="Ald_DH/histidinol_DH"/>
</dbReference>
<dbReference type="InterPro" id="IPR016163">
    <property type="entry name" value="Ald_DH_C"/>
</dbReference>
<dbReference type="InterPro" id="IPR016160">
    <property type="entry name" value="Ald_DH_CS_CYS"/>
</dbReference>
<dbReference type="InterPro" id="IPR029510">
    <property type="entry name" value="Ald_DH_CS_GLU"/>
</dbReference>
<dbReference type="InterPro" id="IPR016162">
    <property type="entry name" value="Ald_DH_N"/>
</dbReference>
<dbReference type="InterPro" id="IPR015590">
    <property type="entry name" value="Aldehyde_DH_dom"/>
</dbReference>
<dbReference type="PANTHER" id="PTHR11699">
    <property type="entry name" value="ALDEHYDE DEHYDROGENASE-RELATED"/>
    <property type="match status" value="1"/>
</dbReference>
<dbReference type="Pfam" id="PF00171">
    <property type="entry name" value="Aldedh"/>
    <property type="match status" value="1"/>
</dbReference>
<dbReference type="SUPFAM" id="SSF53720">
    <property type="entry name" value="ALDH-like"/>
    <property type="match status" value="1"/>
</dbReference>
<dbReference type="PROSITE" id="PS00070">
    <property type="entry name" value="ALDEHYDE_DEHYDR_CYS"/>
    <property type="match status" value="1"/>
</dbReference>
<dbReference type="PROSITE" id="PS00687">
    <property type="entry name" value="ALDEHYDE_DEHYDR_GLU"/>
    <property type="match status" value="1"/>
</dbReference>
<feature type="initiator methionine" description="Removed" evidence="1">
    <location>
        <position position="1"/>
    </location>
</feature>
<feature type="chain" id="PRO_0000056414" description="Aldehyde dehydrogenase 1A1">
    <location>
        <begin position="2"/>
        <end position="501"/>
    </location>
</feature>
<feature type="region of interest" description="Mediates interaction with PRMT3" evidence="1">
    <location>
        <begin position="336"/>
        <end position="501"/>
    </location>
</feature>
<feature type="active site" description="Proton acceptor" evidence="7 8">
    <location>
        <position position="269"/>
    </location>
</feature>
<feature type="active site" description="Nucleophile" evidence="7 8">
    <location>
        <position position="303"/>
    </location>
</feature>
<feature type="binding site" evidence="1">
    <location>
        <begin position="167"/>
        <end position="170"/>
    </location>
    <ligand>
        <name>NAD(+)</name>
        <dbReference type="ChEBI" id="CHEBI:57540"/>
    </ligand>
</feature>
<feature type="binding site" evidence="1">
    <location>
        <begin position="193"/>
        <end position="196"/>
    </location>
    <ligand>
        <name>NAD(+)</name>
        <dbReference type="ChEBI" id="CHEBI:57540"/>
    </ligand>
</feature>
<feature type="binding site" evidence="1">
    <location>
        <begin position="226"/>
        <end position="227"/>
    </location>
    <ligand>
        <name>NAD(+)</name>
        <dbReference type="ChEBI" id="CHEBI:57540"/>
    </ligand>
</feature>
<feature type="binding site" evidence="1">
    <location>
        <begin position="246"/>
        <end position="247"/>
    </location>
    <ligand>
        <name>NAD(+)</name>
        <dbReference type="ChEBI" id="CHEBI:57540"/>
    </ligand>
</feature>
<feature type="binding site" evidence="1">
    <location>
        <begin position="269"/>
        <end position="271"/>
    </location>
    <ligand>
        <name>NAD(+)</name>
        <dbReference type="ChEBI" id="CHEBI:57540"/>
    </ligand>
</feature>
<feature type="binding site" evidence="1">
    <location>
        <begin position="349"/>
        <end position="353"/>
    </location>
    <ligand>
        <name>NAD(+)</name>
        <dbReference type="ChEBI" id="CHEBI:57540"/>
    </ligand>
</feature>
<feature type="binding site" evidence="1">
    <location>
        <begin position="400"/>
        <end position="402"/>
    </location>
    <ligand>
        <name>NAD(+)</name>
        <dbReference type="ChEBI" id="CHEBI:57540"/>
    </ligand>
</feature>
<feature type="site" description="Transition state stabilizer" evidence="2">
    <location>
        <position position="170"/>
    </location>
</feature>
<feature type="modified residue" description="N-acetylserine" evidence="9">
    <location>
        <position position="2"/>
    </location>
</feature>
<feature type="modified residue" description="N6-acetyllysine" evidence="1">
    <location>
        <position position="91"/>
    </location>
</feature>
<feature type="modified residue" description="N6-acetyllysine" evidence="1">
    <location>
        <position position="128"/>
    </location>
</feature>
<feature type="modified residue" description="N6-acetyllysine" evidence="1">
    <location>
        <position position="252"/>
    </location>
</feature>
<feature type="modified residue" description="Phosphothreonine" evidence="1">
    <location>
        <position position="337"/>
    </location>
</feature>
<feature type="modified residue" description="N6-acetyllysine" evidence="1">
    <location>
        <position position="353"/>
    </location>
</feature>
<feature type="modified residue" description="N6-acetyllysine" evidence="1">
    <location>
        <position position="367"/>
    </location>
</feature>
<feature type="modified residue" description="N6-acetyllysine" evidence="1">
    <location>
        <position position="410"/>
    </location>
</feature>
<feature type="modified residue" description="Phosphoserine" evidence="1">
    <location>
        <position position="413"/>
    </location>
</feature>
<feature type="modified residue" description="N6-acetyllysine" evidence="1">
    <location>
        <position position="419"/>
    </location>
</feature>
<feature type="modified residue" description="N6-acetyllysine" evidence="1">
    <location>
        <position position="435"/>
    </location>
</feature>
<feature type="modified residue" description="N6-acetyllysine" evidence="1">
    <location>
        <position position="495"/>
    </location>
</feature>
<protein>
    <recommendedName>
        <fullName evidence="1">Aldehyde dehydrogenase 1A1</fullName>
        <ecNumber evidence="3">1.2.1.19</ecNumber>
        <ecNumber evidence="1">1.2.1.28</ecNumber>
        <ecNumber evidence="1">1.2.1.3</ecNumber>
        <ecNumber evidence="4">1.2.1.36</ecNumber>
    </recommendedName>
    <alternativeName>
        <fullName evidence="1">3-deoxyglucosone dehydrogenase</fullName>
    </alternativeName>
    <alternativeName>
        <fullName>ALDH-E1</fullName>
    </alternativeName>
    <alternativeName>
        <fullName>ALHDII</fullName>
    </alternativeName>
    <alternativeName>
        <fullName>Aldehyde dehydrogenase family 1 member A1</fullName>
    </alternativeName>
    <alternativeName>
        <fullName evidence="11">Aldehyde dehydrogenase, cytosolic</fullName>
    </alternativeName>
    <alternativeName>
        <fullName evidence="10">Retinal dehydrogenase 1</fullName>
        <shortName evidence="10">RALDH 1</shortName>
        <shortName evidence="10">RalDH1</shortName>
    </alternativeName>
</protein>
<proteinExistence type="evidence at protein level"/>
<reference key="1">
    <citation type="journal article" date="1984" name="Eur. J. Biochem.">
        <title>The cytoplasmic isoenzyme of horse liver aldehyde dehydrogenase. Relationship to the corresponding human isoenzyme.</title>
        <authorList>
            <person name="von Bahr-Lindstroem H."/>
            <person name="Hempel J."/>
            <person name="Joernvall H."/>
        </authorList>
    </citation>
    <scope>PROTEIN SEQUENCE OF 2-501</scope>
    <scope>ACETYLATION AT SER-2</scope>
</reference>
<accession>P15437</accession>
<sequence length="501" mass="54875">MSSSGTPDLPVLLTDLKFQYTKIFINNEWHDSVSGKKFPVFNPATEEKLCEVEEGDKEDVNKAVAAARQAFQIGSPWRTMDASERGRLLYKLADLVERDRLILATMESMNGGKLFSNAYLMDLGGCLKTLRYCAGWADKIQGRTIPSDGNFFTYTRHEPVGVCGQILPWNFPLLMFLWKIAPALSCGNTVVVKPAEQTPLSALHVATLIKEAGFPPGVVNIVPGYGPTAGAAISSHMDIDKVAFTGSTEVGKLIKEAAGKSNLKRVTLELGGKSPFIVFADADLETALEVTHQALFYHQGQCCVAASRLFVEESIYDEFVRRSVERAKKYVLGNPLTPGVSQGPQIDKEQYDKILDLIESGKKEGAKLECGGGPWGNKGYFIQPTVFSNVSDEMRIAKEEIFGPVQQIMKFKSLDDVIKRANNTTYGLFAGSFTKDLDKAITVSAALQAGTVWVNCYGVVSAQCPFGGFKMSGNGREMGEYGFHEYTEVKTVTVKISQKNS</sequence>
<gene>
    <name evidence="1" type="primary">ALDH1A1</name>
</gene>
<comment type="function">
    <text evidence="1 3">Cytosolic dehydrogenase that catalyzes the irreversible oxidation of a wide range of aldehydes to their corresponding carboxylic acid (By similarity). Functions downstream of retinol dehydrogenases and catalyzes the oxidation of retinaldehyde into retinoic acid, the second step in the oxidation of retinol/vitamin A into retinoic acid. This pathway is crucial to control the levels of retinol and retinoic acid, two important molecules which excess can be teratogenic and cytotoxic (By similarity). Also oxidizes aldehydes resulting from lipid peroxidation like (E)-4-hydroxynon-2-enal/HNE, malonaldehyde and hexanal that form protein adducts and are highly cytotoxic. By participating for instance to the clearance of (E)-4-hydroxynon-2-enal/HNE in the lens epithelium prevents the formation of HNE-protein adducts and lens opacification. Also functions downstream of fructosamine-3-kinase in the fructosamine degradation pathway by catalyzing the oxidation of 3-deoxyglucosone, the carbohydrate product of fructosamine 3-phosphate decomposition, which is itself a potent glycating agent that may react with lysine and arginine side-chains of proteins (By similarity). Also has an aminobutyraldehyde dehydrogenase activity and is probably part of an alternative pathway for the biosynthesis of GABA/4-aminobutanoate in midbrain, thereby playing a role in GABAergic synaptic transmission (By similarity).</text>
</comment>
<comment type="catalytic activity">
    <reaction evidence="1">
        <text>an aldehyde + NAD(+) + H2O = a carboxylate + NADH + 2 H(+)</text>
        <dbReference type="Rhea" id="RHEA:16185"/>
        <dbReference type="ChEBI" id="CHEBI:15377"/>
        <dbReference type="ChEBI" id="CHEBI:15378"/>
        <dbReference type="ChEBI" id="CHEBI:17478"/>
        <dbReference type="ChEBI" id="CHEBI:29067"/>
        <dbReference type="ChEBI" id="CHEBI:57540"/>
        <dbReference type="ChEBI" id="CHEBI:57945"/>
        <dbReference type="EC" id="1.2.1.3"/>
    </reaction>
    <physiologicalReaction direction="left-to-right" evidence="1">
        <dbReference type="Rhea" id="RHEA:16186"/>
    </physiologicalReaction>
</comment>
<comment type="catalytic activity">
    <reaction evidence="4">
        <text>all-trans-retinal + NAD(+) + H2O = all-trans-retinoate + NADH + 2 H(+)</text>
        <dbReference type="Rhea" id="RHEA:42080"/>
        <dbReference type="ChEBI" id="CHEBI:15377"/>
        <dbReference type="ChEBI" id="CHEBI:15378"/>
        <dbReference type="ChEBI" id="CHEBI:17898"/>
        <dbReference type="ChEBI" id="CHEBI:35291"/>
        <dbReference type="ChEBI" id="CHEBI:57540"/>
        <dbReference type="ChEBI" id="CHEBI:57945"/>
        <dbReference type="EC" id="1.2.1.36"/>
    </reaction>
    <physiologicalReaction direction="left-to-right" evidence="4">
        <dbReference type="Rhea" id="RHEA:42081"/>
    </physiologicalReaction>
</comment>
<comment type="catalytic activity">
    <reaction evidence="4">
        <text>9-cis-retinal + NAD(+) + H2O = 9-cis-retinoate + NADH + 2 H(+)</text>
        <dbReference type="Rhea" id="RHEA:42084"/>
        <dbReference type="ChEBI" id="CHEBI:15377"/>
        <dbReference type="ChEBI" id="CHEBI:15378"/>
        <dbReference type="ChEBI" id="CHEBI:57540"/>
        <dbReference type="ChEBI" id="CHEBI:57945"/>
        <dbReference type="ChEBI" id="CHEBI:78273"/>
        <dbReference type="ChEBI" id="CHEBI:78630"/>
    </reaction>
    <physiologicalReaction direction="left-to-right" evidence="4">
        <dbReference type="Rhea" id="RHEA:42085"/>
    </physiologicalReaction>
</comment>
<comment type="catalytic activity">
    <reaction evidence="4">
        <text>11-cis-retinal + NAD(+) + H2O = 11-cis-retinoate + NADH + 2 H(+)</text>
        <dbReference type="Rhea" id="RHEA:47132"/>
        <dbReference type="ChEBI" id="CHEBI:15377"/>
        <dbReference type="ChEBI" id="CHEBI:15378"/>
        <dbReference type="ChEBI" id="CHEBI:16066"/>
        <dbReference type="ChEBI" id="CHEBI:57540"/>
        <dbReference type="ChEBI" id="CHEBI:57945"/>
        <dbReference type="ChEBI" id="CHEBI:87435"/>
    </reaction>
    <physiologicalReaction direction="left-to-right" evidence="4">
        <dbReference type="Rhea" id="RHEA:47133"/>
    </physiologicalReaction>
</comment>
<comment type="catalytic activity">
    <reaction evidence="6">
        <text>13-cis-retinal + NAD(+) + H2O = 13-cis-retinoate + NADH + 2 H(+)</text>
        <dbReference type="Rhea" id="RHEA:67332"/>
        <dbReference type="ChEBI" id="CHEBI:15377"/>
        <dbReference type="ChEBI" id="CHEBI:15378"/>
        <dbReference type="ChEBI" id="CHEBI:45487"/>
        <dbReference type="ChEBI" id="CHEBI:57540"/>
        <dbReference type="ChEBI" id="CHEBI:57945"/>
        <dbReference type="ChEBI" id="CHEBI:169952"/>
    </reaction>
    <physiologicalReaction direction="left-to-right" evidence="6">
        <dbReference type="Rhea" id="RHEA:67333"/>
    </physiologicalReaction>
</comment>
<comment type="catalytic activity">
    <reaction evidence="1">
        <text>3-deoxyglucosone + NAD(+) + H2O = 2-dehydro-3-deoxy-D-gluconate + NADH + 2 H(+)</text>
        <dbReference type="Rhea" id="RHEA:67244"/>
        <dbReference type="ChEBI" id="CHEBI:15377"/>
        <dbReference type="ChEBI" id="CHEBI:15378"/>
        <dbReference type="ChEBI" id="CHEBI:57540"/>
        <dbReference type="ChEBI" id="CHEBI:57945"/>
        <dbReference type="ChEBI" id="CHEBI:57990"/>
        <dbReference type="ChEBI" id="CHEBI:60777"/>
    </reaction>
    <physiologicalReaction direction="left-to-right" evidence="1">
        <dbReference type="Rhea" id="RHEA:67245"/>
    </physiologicalReaction>
</comment>
<comment type="catalytic activity">
    <reaction evidence="1">
        <text>(E)-4-hydroxynon-2-enal + NAD(+) + H2O = (E)-4-hydroxynon-2-enoate + NADH + 2 H(+)</text>
        <dbReference type="Rhea" id="RHEA:67248"/>
        <dbReference type="ChEBI" id="CHEBI:15377"/>
        <dbReference type="ChEBI" id="CHEBI:15378"/>
        <dbReference type="ChEBI" id="CHEBI:57540"/>
        <dbReference type="ChEBI" id="CHEBI:57945"/>
        <dbReference type="ChEBI" id="CHEBI:58968"/>
        <dbReference type="ChEBI" id="CHEBI:142920"/>
    </reaction>
    <physiologicalReaction direction="left-to-right" evidence="1">
        <dbReference type="Rhea" id="RHEA:67249"/>
    </physiologicalReaction>
</comment>
<comment type="catalytic activity">
    <reaction evidence="1">
        <text>malonaldehyde + NAD(+) + H2O = 3-oxopropanoate + NADH + 2 H(+)</text>
        <dbReference type="Rhea" id="RHEA:67252"/>
        <dbReference type="ChEBI" id="CHEBI:15377"/>
        <dbReference type="ChEBI" id="CHEBI:15378"/>
        <dbReference type="ChEBI" id="CHEBI:33190"/>
        <dbReference type="ChEBI" id="CHEBI:57540"/>
        <dbReference type="ChEBI" id="CHEBI:57945"/>
        <dbReference type="ChEBI" id="CHEBI:566274"/>
    </reaction>
    <physiologicalReaction direction="left-to-right" evidence="1">
        <dbReference type="Rhea" id="RHEA:67253"/>
    </physiologicalReaction>
</comment>
<comment type="catalytic activity">
    <reaction evidence="1">
        <text>hexanal + NAD(+) + H2O = hexanoate + NADH + 2 H(+)</text>
        <dbReference type="Rhea" id="RHEA:67276"/>
        <dbReference type="ChEBI" id="CHEBI:15377"/>
        <dbReference type="ChEBI" id="CHEBI:15378"/>
        <dbReference type="ChEBI" id="CHEBI:17120"/>
        <dbReference type="ChEBI" id="CHEBI:57540"/>
        <dbReference type="ChEBI" id="CHEBI:57945"/>
        <dbReference type="ChEBI" id="CHEBI:88528"/>
    </reaction>
    <physiologicalReaction direction="left-to-right" evidence="1">
        <dbReference type="Rhea" id="RHEA:67277"/>
    </physiologicalReaction>
</comment>
<comment type="catalytic activity">
    <reaction evidence="1">
        <text>propanal + NAD(+) + H2O = propanoate + NADH + 2 H(+)</text>
        <dbReference type="Rhea" id="RHEA:67256"/>
        <dbReference type="ChEBI" id="CHEBI:15377"/>
        <dbReference type="ChEBI" id="CHEBI:15378"/>
        <dbReference type="ChEBI" id="CHEBI:17153"/>
        <dbReference type="ChEBI" id="CHEBI:17272"/>
        <dbReference type="ChEBI" id="CHEBI:57540"/>
        <dbReference type="ChEBI" id="CHEBI:57945"/>
    </reaction>
    <physiologicalReaction direction="left-to-right" evidence="1">
        <dbReference type="Rhea" id="RHEA:67257"/>
    </physiologicalReaction>
</comment>
<comment type="catalytic activity">
    <reaction evidence="1">
        <text>acetaldehyde + NAD(+) + H2O = acetate + NADH + 2 H(+)</text>
        <dbReference type="Rhea" id="RHEA:25294"/>
        <dbReference type="ChEBI" id="CHEBI:15343"/>
        <dbReference type="ChEBI" id="CHEBI:15377"/>
        <dbReference type="ChEBI" id="CHEBI:15378"/>
        <dbReference type="ChEBI" id="CHEBI:30089"/>
        <dbReference type="ChEBI" id="CHEBI:57540"/>
        <dbReference type="ChEBI" id="CHEBI:57945"/>
        <dbReference type="EC" id="1.2.1.3"/>
    </reaction>
    <physiologicalReaction direction="left-to-right" evidence="1">
        <dbReference type="Rhea" id="RHEA:25295"/>
    </physiologicalReaction>
</comment>
<comment type="catalytic activity">
    <reaction evidence="1">
        <text>benzaldehyde + NAD(+) + H2O = benzoate + NADH + 2 H(+)</text>
        <dbReference type="Rhea" id="RHEA:11840"/>
        <dbReference type="ChEBI" id="CHEBI:15377"/>
        <dbReference type="ChEBI" id="CHEBI:15378"/>
        <dbReference type="ChEBI" id="CHEBI:16150"/>
        <dbReference type="ChEBI" id="CHEBI:17169"/>
        <dbReference type="ChEBI" id="CHEBI:57540"/>
        <dbReference type="ChEBI" id="CHEBI:57945"/>
        <dbReference type="EC" id="1.2.1.28"/>
    </reaction>
    <physiologicalReaction direction="left-to-right" evidence="1">
        <dbReference type="Rhea" id="RHEA:11841"/>
    </physiologicalReaction>
</comment>
<comment type="catalytic activity">
    <reaction evidence="3">
        <text>4-aminobutanal + NAD(+) + H2O = 4-aminobutanoate + NADH + 2 H(+)</text>
        <dbReference type="Rhea" id="RHEA:19105"/>
        <dbReference type="ChEBI" id="CHEBI:15377"/>
        <dbReference type="ChEBI" id="CHEBI:15378"/>
        <dbReference type="ChEBI" id="CHEBI:57540"/>
        <dbReference type="ChEBI" id="CHEBI:57945"/>
        <dbReference type="ChEBI" id="CHEBI:58264"/>
        <dbReference type="ChEBI" id="CHEBI:59888"/>
        <dbReference type="EC" id="1.2.1.19"/>
    </reaction>
    <physiologicalReaction direction="left-to-right" evidence="3">
        <dbReference type="Rhea" id="RHEA:19106"/>
    </physiologicalReaction>
</comment>
<comment type="pathway">
    <text evidence="4">Cofactor metabolism; retinol metabolism.</text>
</comment>
<comment type="subunit">
    <text evidence="1 5">Homotetramer (By similarity). Interacts with PRMT3; the interaction is direct, inhibits ALDH1A1 aldehyde dehydrogenase activity and is independent of the methyltransferase activity of PRMT3 (By similarity).</text>
</comment>
<comment type="subcellular location">
    <subcellularLocation>
        <location evidence="1">Cytoplasm</location>
        <location evidence="1">Cytosol</location>
    </subcellularLocation>
    <subcellularLocation>
        <location evidence="3">Cell projection</location>
        <location evidence="3">Axon</location>
    </subcellularLocation>
</comment>
<comment type="PTM">
    <text evidence="9">The N-terminus is blocked most probably by acetylation.</text>
</comment>
<comment type="similarity">
    <text evidence="10">Belongs to the aldehyde dehydrogenase family.</text>
</comment>